<feature type="chain" id="PRO_0000078192" description="Snake venom metalloproteinase hemorrhagic factor 2">
    <location>
        <begin position="1"/>
        <end position="200"/>
    </location>
</feature>
<feature type="domain" description="Peptidase M12B" evidence="4">
    <location>
        <begin position="4"/>
        <end position="200"/>
    </location>
</feature>
<feature type="active site" evidence="4 5">
    <location>
        <position position="141"/>
    </location>
</feature>
<feature type="binding site" evidence="2">
    <location>
        <position position="7"/>
    </location>
    <ligand>
        <name>Ca(2+)</name>
        <dbReference type="ChEBI" id="CHEBI:29108"/>
    </ligand>
</feature>
<feature type="binding site" evidence="2">
    <location>
        <position position="91"/>
    </location>
    <ligand>
        <name>Ca(2+)</name>
        <dbReference type="ChEBI" id="CHEBI:29108"/>
    </ligand>
</feature>
<feature type="binding site" evidence="4">
    <location>
        <position position="140"/>
    </location>
    <ligand>
        <name>Zn(2+)</name>
        <dbReference type="ChEBI" id="CHEBI:29105"/>
        <note>catalytic</note>
    </ligand>
</feature>
<feature type="binding site" evidence="4">
    <location>
        <position position="144"/>
    </location>
    <ligand>
        <name>Zn(2+)</name>
        <dbReference type="ChEBI" id="CHEBI:29105"/>
        <note>catalytic</note>
    </ligand>
</feature>
<feature type="binding site" evidence="4">
    <location>
        <position position="150"/>
    </location>
    <ligand>
        <name>Zn(2+)</name>
        <dbReference type="ChEBI" id="CHEBI:29105"/>
        <note>catalytic</note>
    </ligand>
</feature>
<feature type="binding site" evidence="2">
    <location>
        <position position="195"/>
    </location>
    <ligand>
        <name>Ca(2+)</name>
        <dbReference type="ChEBI" id="CHEBI:29108"/>
    </ligand>
</feature>
<feature type="binding site" evidence="2">
    <location>
        <position position="198"/>
    </location>
    <ligand>
        <name>Ca(2+)</name>
        <dbReference type="ChEBI" id="CHEBI:29108"/>
    </ligand>
</feature>
<feature type="glycosylation site" description="N-linked (GlcNAc...) asparagine" evidence="3">
    <location>
        <position position="70"/>
    </location>
</feature>
<feature type="disulfide bond" evidence="4">
    <location>
        <begin position="115"/>
        <end position="195"/>
    </location>
</feature>
<feature type="disulfide bond" evidence="4">
    <location>
        <begin position="155"/>
        <end position="179"/>
    </location>
</feature>
<feature type="disulfide bond" evidence="4">
    <location>
        <begin position="157"/>
        <end position="162"/>
    </location>
</feature>
<feature type="sequence variant">
    <original>I</original>
    <variation>T</variation>
    <location>
        <position position="134"/>
    </location>
</feature>
<reference key="1">
    <citation type="journal article" date="1991" name="FEBS Lett.">
        <title>The complete amino acid sequence of the haemorrhagic factor LHFII, a metalloproteinase isolated from the venom of the bushmaster snake (Lachesis muta muta).</title>
        <authorList>
            <person name="Sanchez E.F."/>
            <person name="Diniz C.R."/>
            <person name="Richardson M."/>
        </authorList>
    </citation>
    <scope>PROTEIN SEQUENCE</scope>
    <scope>SUBCELLULAR LOCATION</scope>
    <source>
        <tissue>Venom</tissue>
    </source>
</reference>
<reference key="2">
    <citation type="journal article" date="1999" name="Toxicon">
        <title>Characterization of the local tissue damage induced by LHF-II, a metalloproteinase with weak hemorrhagic activity isolated from Lachesis muta muta snake venom.</title>
        <authorList>
            <person name="Rucavado A."/>
            <person name="Flores-Sanchez E."/>
            <person name="Franceschi A."/>
            <person name="Magalhaes A."/>
            <person name="Gutierrez J.M."/>
        </authorList>
    </citation>
    <scope>FUNCTION</scope>
    <scope>SUBCELLULAR LOCATION</scope>
    <source>
        <tissue>Venom</tissue>
    </source>
</reference>
<accession>P22796</accession>
<dbReference type="EC" id="3.4.24.-"/>
<dbReference type="PIR" id="S15111">
    <property type="entry name" value="S15111"/>
</dbReference>
<dbReference type="SMR" id="P22796"/>
<dbReference type="MEROPS" id="M12.162"/>
<dbReference type="BRENDA" id="3.4.24.B37">
    <property type="organism ID" value="8183"/>
</dbReference>
<dbReference type="GO" id="GO:0005576">
    <property type="term" value="C:extracellular region"/>
    <property type="evidence" value="ECO:0000314"/>
    <property type="project" value="UniProtKB"/>
</dbReference>
<dbReference type="GO" id="GO:0005886">
    <property type="term" value="C:plasma membrane"/>
    <property type="evidence" value="ECO:0007669"/>
    <property type="project" value="TreeGrafter"/>
</dbReference>
<dbReference type="GO" id="GO:0046872">
    <property type="term" value="F:metal ion binding"/>
    <property type="evidence" value="ECO:0007669"/>
    <property type="project" value="UniProtKB-KW"/>
</dbReference>
<dbReference type="GO" id="GO:0004222">
    <property type="term" value="F:metalloendopeptidase activity"/>
    <property type="evidence" value="ECO:0007669"/>
    <property type="project" value="InterPro"/>
</dbReference>
<dbReference type="GO" id="GO:0008233">
    <property type="term" value="F:peptidase activity"/>
    <property type="evidence" value="ECO:0000314"/>
    <property type="project" value="UniProtKB"/>
</dbReference>
<dbReference type="GO" id="GO:0090729">
    <property type="term" value="F:toxin activity"/>
    <property type="evidence" value="ECO:0007669"/>
    <property type="project" value="UniProtKB-KW"/>
</dbReference>
<dbReference type="GO" id="GO:0006508">
    <property type="term" value="P:proteolysis"/>
    <property type="evidence" value="ECO:0007669"/>
    <property type="project" value="UniProtKB-KW"/>
</dbReference>
<dbReference type="GO" id="GO:0044523">
    <property type="term" value="P:venom-mediated disruption of extracellular matrix in another organism"/>
    <property type="evidence" value="ECO:0000314"/>
    <property type="project" value="UniProtKB"/>
</dbReference>
<dbReference type="GO" id="GO:0044398">
    <property type="term" value="P:venom-mediated edema in another organism"/>
    <property type="evidence" value="ECO:0000314"/>
    <property type="project" value="UniProtKB"/>
</dbReference>
<dbReference type="GO" id="GO:0044358">
    <property type="term" value="P:venom-mediated hemorrhage in another organism"/>
    <property type="evidence" value="ECO:0000314"/>
    <property type="project" value="UniProtKB"/>
</dbReference>
<dbReference type="GO" id="GO:0044522">
    <property type="term" value="P:venom-mediated myocyte killing in another organism"/>
    <property type="evidence" value="ECO:0000314"/>
    <property type="project" value="UniProtKB"/>
</dbReference>
<dbReference type="CDD" id="cd04269">
    <property type="entry name" value="ZnMc_adamalysin_II_like"/>
    <property type="match status" value="1"/>
</dbReference>
<dbReference type="FunFam" id="3.40.390.10:FF:000002">
    <property type="entry name" value="Disintegrin and metalloproteinase domain-containing protein 22"/>
    <property type="match status" value="1"/>
</dbReference>
<dbReference type="Gene3D" id="3.40.390.10">
    <property type="entry name" value="Collagenase (Catalytic Domain)"/>
    <property type="match status" value="1"/>
</dbReference>
<dbReference type="InterPro" id="IPR024079">
    <property type="entry name" value="MetalloPept_cat_dom_sf"/>
</dbReference>
<dbReference type="InterPro" id="IPR001590">
    <property type="entry name" value="Peptidase_M12B"/>
</dbReference>
<dbReference type="InterPro" id="IPR034027">
    <property type="entry name" value="Reprolysin_adamalysin"/>
</dbReference>
<dbReference type="PANTHER" id="PTHR11905">
    <property type="entry name" value="ADAM A DISINTEGRIN AND METALLOPROTEASE DOMAIN"/>
    <property type="match status" value="1"/>
</dbReference>
<dbReference type="PANTHER" id="PTHR11905:SF32">
    <property type="entry name" value="DISINTEGRIN AND METALLOPROTEINASE DOMAIN-CONTAINING PROTEIN 28"/>
    <property type="match status" value="1"/>
</dbReference>
<dbReference type="Pfam" id="PF01421">
    <property type="entry name" value="Reprolysin"/>
    <property type="match status" value="1"/>
</dbReference>
<dbReference type="SUPFAM" id="SSF55486">
    <property type="entry name" value="Metalloproteases ('zincins'), catalytic domain"/>
    <property type="match status" value="1"/>
</dbReference>
<dbReference type="PROSITE" id="PS50215">
    <property type="entry name" value="ADAM_MEPRO"/>
    <property type="match status" value="1"/>
</dbReference>
<dbReference type="PROSITE" id="PS00142">
    <property type="entry name" value="ZINC_PROTEASE"/>
    <property type="match status" value="1"/>
</dbReference>
<proteinExistence type="evidence at protein level"/>
<organism>
    <name type="scientific">Lachesis muta muta</name>
    <name type="common">Bushmaster</name>
    <dbReference type="NCBI Taxonomy" id="8753"/>
    <lineage>
        <taxon>Eukaryota</taxon>
        <taxon>Metazoa</taxon>
        <taxon>Chordata</taxon>
        <taxon>Craniata</taxon>
        <taxon>Vertebrata</taxon>
        <taxon>Euteleostomi</taxon>
        <taxon>Lepidosauria</taxon>
        <taxon>Squamata</taxon>
        <taxon>Bifurcata</taxon>
        <taxon>Unidentata</taxon>
        <taxon>Episquamata</taxon>
        <taxon>Toxicofera</taxon>
        <taxon>Serpentes</taxon>
        <taxon>Colubroidea</taxon>
        <taxon>Viperidae</taxon>
        <taxon>Crotalinae</taxon>
        <taxon>Lachesis</taxon>
    </lineage>
</organism>
<name>VM1H2_LACMU</name>
<comment type="function">
    <text evidence="6">Snake venom zinc metalloproteinase that induces weak hemorrhage and mild myonecrosis. Shows mild myotoxicity by killing myocytes. Also induces edema in the mouse footpad at doses where hemorrhage is absent. In vitro, degrades laminin, fibronectin, and type IV collagen, suggesting this toxin play a role in local tissue damage by degrading extracellular matrix, and possibly by degrading muscle extracellular matrix. Hemorrhage is not due to cytotoxicity towards endothelial cells in culture, and may only play a minor role in local bleeding characteristic of L.muta envenomations. Also induces the synthesis of several endogenous matrix metalloproteinases, which in turn, may participate in extracellular matrix degradation.</text>
</comment>
<comment type="cofactor">
    <cofactor evidence="1">
        <name>Zn(2+)</name>
        <dbReference type="ChEBI" id="CHEBI:29105"/>
    </cofactor>
    <text evidence="1">Binds 1 zinc ion per subunit.</text>
</comment>
<comment type="subunit">
    <text evidence="1">Monomer.</text>
</comment>
<comment type="subcellular location">
    <subcellularLocation>
        <location evidence="6 7">Secreted</location>
    </subcellularLocation>
</comment>
<comment type="tissue specificity">
    <text evidence="10 11">Expressed by the venom gland.</text>
</comment>
<comment type="similarity">
    <text evidence="9">Belongs to the venom metalloproteinase (M12B) family. P-I subfamily.</text>
</comment>
<evidence type="ECO:0000250" key="1"/>
<evidence type="ECO:0000250" key="2">
    <source>
        <dbReference type="UniProtKB" id="P85314"/>
    </source>
</evidence>
<evidence type="ECO:0000255" key="3"/>
<evidence type="ECO:0000255" key="4">
    <source>
        <dbReference type="PROSITE-ProRule" id="PRU00276"/>
    </source>
</evidence>
<evidence type="ECO:0000255" key="5">
    <source>
        <dbReference type="PROSITE-ProRule" id="PRU10095"/>
    </source>
</evidence>
<evidence type="ECO:0000269" key="6">
    <source>
    </source>
</evidence>
<evidence type="ECO:0000269" key="7">
    <source>
    </source>
</evidence>
<evidence type="ECO:0000303" key="8">
    <source>
    </source>
</evidence>
<evidence type="ECO:0000305" key="9"/>
<evidence type="ECO:0000305" key="10">
    <source>
    </source>
</evidence>
<evidence type="ECO:0000305" key="11">
    <source>
    </source>
</evidence>
<protein>
    <recommendedName>
        <fullName>Snake venom metalloproteinase hemorrhagic factor 2</fullName>
        <shortName>SVMP</shortName>
        <ecNumber>3.4.24.-</ecNumber>
    </recommendedName>
    <alternativeName>
        <fullName evidence="8">Hemorrhagic factor II</fullName>
    </alternativeName>
    <alternativeName>
        <fullName>LHF-II</fullName>
        <shortName evidence="8">LHFII</shortName>
    </alternativeName>
</protein>
<keyword id="KW-0106">Calcium</keyword>
<keyword id="KW-0903">Direct protein sequencing</keyword>
<keyword id="KW-1015">Disulfide bond</keyword>
<keyword id="KW-0325">Glycoprotein</keyword>
<keyword id="KW-1200">Hemorrhagic toxin</keyword>
<keyword id="KW-1199">Hemostasis impairing toxin</keyword>
<keyword id="KW-0378">Hydrolase</keyword>
<keyword id="KW-0479">Metal-binding</keyword>
<keyword id="KW-0482">Metalloprotease</keyword>
<keyword id="KW-0959">Myotoxin</keyword>
<keyword id="KW-0645">Protease</keyword>
<keyword id="KW-0964">Secreted</keyword>
<keyword id="KW-0800">Toxin</keyword>
<keyword id="KW-0862">Zinc</keyword>
<sequence>FSQKYIELVVVADHGMFTKYNGNLNTIRTRVHEIVNTLNGFYRSLNILISLTDLEIWSNQDLINVQSAANDTLKTFGEWRERVLLNRISHDNAQLLTAIDLADNTIGIAYTGGMCYPKNSVGIVQDHSPKTLLIAVTMAHELGHNLGMKHDENHCHCSASFCIMPPSISEGPSYEFSDCSKDYYQMFLTKRKPQCILNKP</sequence>